<keyword id="KW-0687">Ribonucleoprotein</keyword>
<keyword id="KW-0689">Ribosomal protein</keyword>
<keyword id="KW-0694">RNA-binding</keyword>
<keyword id="KW-0699">rRNA-binding</keyword>
<feature type="chain" id="PRO_1000055574" description="Large ribosomal subunit protein uL14">
    <location>
        <begin position="1"/>
        <end position="122"/>
    </location>
</feature>
<sequence>MIQVESTLQVADNSGAKKVACIKVLGGSHRRYATVGDIIMVSVKEAMPHCKVKKGDVMQAVIVRTAKEVRRADGSYIKFDSNAAVLLNKQGEPVGTRIFGPVARELRARNFMKIVSLAPEVL</sequence>
<organism>
    <name type="scientific">Nitratidesulfovibrio vulgaris (strain DP4)</name>
    <name type="common">Desulfovibrio vulgaris</name>
    <dbReference type="NCBI Taxonomy" id="391774"/>
    <lineage>
        <taxon>Bacteria</taxon>
        <taxon>Pseudomonadati</taxon>
        <taxon>Thermodesulfobacteriota</taxon>
        <taxon>Desulfovibrionia</taxon>
        <taxon>Desulfovibrionales</taxon>
        <taxon>Desulfovibrionaceae</taxon>
        <taxon>Nitratidesulfovibrio</taxon>
    </lineage>
</organism>
<proteinExistence type="inferred from homology"/>
<evidence type="ECO:0000255" key="1">
    <source>
        <dbReference type="HAMAP-Rule" id="MF_01367"/>
    </source>
</evidence>
<evidence type="ECO:0000305" key="2"/>
<name>RL14_NITV4</name>
<reference key="1">
    <citation type="journal article" date="2009" name="Environ. Microbiol.">
        <title>Contribution of mobile genetic elements to Desulfovibrio vulgaris genome plasticity.</title>
        <authorList>
            <person name="Walker C.B."/>
            <person name="Stolyar S."/>
            <person name="Chivian D."/>
            <person name="Pinel N."/>
            <person name="Gabster J.A."/>
            <person name="Dehal P.S."/>
            <person name="He Z."/>
            <person name="Yang Z.K."/>
            <person name="Yen H.C."/>
            <person name="Zhou J."/>
            <person name="Wall J.D."/>
            <person name="Hazen T.C."/>
            <person name="Arkin A.P."/>
            <person name="Stahl D.A."/>
        </authorList>
    </citation>
    <scope>NUCLEOTIDE SEQUENCE [LARGE SCALE GENOMIC DNA]</scope>
    <source>
        <strain>DP4</strain>
    </source>
</reference>
<protein>
    <recommendedName>
        <fullName evidence="1">Large ribosomal subunit protein uL14</fullName>
    </recommendedName>
    <alternativeName>
        <fullName evidence="2">50S ribosomal protein L14</fullName>
    </alternativeName>
</protein>
<gene>
    <name evidence="1" type="primary">rplN</name>
    <name type="ordered locus">Dvul_1755</name>
</gene>
<comment type="function">
    <text evidence="1">Binds to 23S rRNA. Forms part of two intersubunit bridges in the 70S ribosome.</text>
</comment>
<comment type="subunit">
    <text evidence="1">Part of the 50S ribosomal subunit. Forms a cluster with proteins L3 and L19. In the 70S ribosome, L14 and L19 interact and together make contacts with the 16S rRNA in bridges B5 and B8.</text>
</comment>
<comment type="similarity">
    <text evidence="1">Belongs to the universal ribosomal protein uL14 family.</text>
</comment>
<accession>A1VEA6</accession>
<dbReference type="EMBL" id="CP000527">
    <property type="protein sequence ID" value="ABM28772.1"/>
    <property type="molecule type" value="Genomic_DNA"/>
</dbReference>
<dbReference type="RefSeq" id="WP_010938608.1">
    <property type="nucleotide sequence ID" value="NC_008751.1"/>
</dbReference>
<dbReference type="SMR" id="A1VEA6"/>
<dbReference type="KEGG" id="dvl:Dvul_1755"/>
<dbReference type="HOGENOM" id="CLU_095071_2_1_7"/>
<dbReference type="Proteomes" id="UP000009173">
    <property type="component" value="Chromosome"/>
</dbReference>
<dbReference type="GO" id="GO:0022625">
    <property type="term" value="C:cytosolic large ribosomal subunit"/>
    <property type="evidence" value="ECO:0007669"/>
    <property type="project" value="TreeGrafter"/>
</dbReference>
<dbReference type="GO" id="GO:0070180">
    <property type="term" value="F:large ribosomal subunit rRNA binding"/>
    <property type="evidence" value="ECO:0007669"/>
    <property type="project" value="TreeGrafter"/>
</dbReference>
<dbReference type="GO" id="GO:0003735">
    <property type="term" value="F:structural constituent of ribosome"/>
    <property type="evidence" value="ECO:0007669"/>
    <property type="project" value="InterPro"/>
</dbReference>
<dbReference type="GO" id="GO:0006412">
    <property type="term" value="P:translation"/>
    <property type="evidence" value="ECO:0007669"/>
    <property type="project" value="UniProtKB-UniRule"/>
</dbReference>
<dbReference type="CDD" id="cd00337">
    <property type="entry name" value="Ribosomal_uL14"/>
    <property type="match status" value="1"/>
</dbReference>
<dbReference type="FunFam" id="2.40.150.20:FF:000001">
    <property type="entry name" value="50S ribosomal protein L14"/>
    <property type="match status" value="1"/>
</dbReference>
<dbReference type="Gene3D" id="2.40.150.20">
    <property type="entry name" value="Ribosomal protein L14"/>
    <property type="match status" value="1"/>
</dbReference>
<dbReference type="HAMAP" id="MF_01367">
    <property type="entry name" value="Ribosomal_uL14"/>
    <property type="match status" value="1"/>
</dbReference>
<dbReference type="InterPro" id="IPR000218">
    <property type="entry name" value="Ribosomal_uL14"/>
</dbReference>
<dbReference type="InterPro" id="IPR005745">
    <property type="entry name" value="Ribosomal_uL14_bac-type"/>
</dbReference>
<dbReference type="InterPro" id="IPR019972">
    <property type="entry name" value="Ribosomal_uL14_CS"/>
</dbReference>
<dbReference type="InterPro" id="IPR036853">
    <property type="entry name" value="Ribosomal_uL14_sf"/>
</dbReference>
<dbReference type="NCBIfam" id="TIGR01067">
    <property type="entry name" value="rplN_bact"/>
    <property type="match status" value="1"/>
</dbReference>
<dbReference type="PANTHER" id="PTHR11761">
    <property type="entry name" value="50S/60S RIBOSOMAL PROTEIN L14/L23"/>
    <property type="match status" value="1"/>
</dbReference>
<dbReference type="PANTHER" id="PTHR11761:SF3">
    <property type="entry name" value="LARGE RIBOSOMAL SUBUNIT PROTEIN UL14M"/>
    <property type="match status" value="1"/>
</dbReference>
<dbReference type="Pfam" id="PF00238">
    <property type="entry name" value="Ribosomal_L14"/>
    <property type="match status" value="1"/>
</dbReference>
<dbReference type="SMART" id="SM01374">
    <property type="entry name" value="Ribosomal_L14"/>
    <property type="match status" value="1"/>
</dbReference>
<dbReference type="SUPFAM" id="SSF50193">
    <property type="entry name" value="Ribosomal protein L14"/>
    <property type="match status" value="1"/>
</dbReference>
<dbReference type="PROSITE" id="PS00049">
    <property type="entry name" value="RIBOSOMAL_L14"/>
    <property type="match status" value="1"/>
</dbReference>